<sequence>MTQPSRRKGGLGRGLAALIPTGPADGESGPPTLGPRMGSATADVVIGGPVPDTSVMGAIYREIPPSAIEANPRQPRQVFDEEALAELVHSIREFGLLQPIVVRSLAGSQTGVRYQIVMGERRWRAAQEAGLATIPAIVRETGDDNLLRDALLENIHRVQLNPLEEAAAYQQLLDEFGVTHDELAARIGRSRPLITNMIRLLKLPIPVQRRVAAGVLSAGHARALLSLEAGPEAQEELASRIVAEGLSVRATEETVTLANHEANRQAHHSDATTPAPPRRKPIQMPGLQDVAERLSTTFDTRVTVSLGKRKGKIVVEFGSVDDLARIVGLMTTDGRDKGLHRDAL</sequence>
<accession>P0A5R3</accession>
<accession>A0A1R3Y5M4</accession>
<accession>O53595</accession>
<accession>O53596</accession>
<accession>X2BQ08</accession>
<comment type="function">
    <text evidence="1">Involved in chromosome partition. Localize to both poles of the predivisional cell following completion of DNA replication. Binds to the DNA origin of replication (By similarity).</text>
</comment>
<comment type="similarity">
    <text evidence="3">Belongs to the ParB family.</text>
</comment>
<organism>
    <name type="scientific">Mycobacterium bovis (strain ATCC BAA-935 / AF2122/97)</name>
    <dbReference type="NCBI Taxonomy" id="233413"/>
    <lineage>
        <taxon>Bacteria</taxon>
        <taxon>Bacillati</taxon>
        <taxon>Actinomycetota</taxon>
        <taxon>Actinomycetes</taxon>
        <taxon>Mycobacteriales</taxon>
        <taxon>Mycobacteriaceae</taxon>
        <taxon>Mycobacterium</taxon>
        <taxon>Mycobacterium tuberculosis complex</taxon>
    </lineage>
</organism>
<evidence type="ECO:0000250" key="1"/>
<evidence type="ECO:0000256" key="2">
    <source>
        <dbReference type="SAM" id="MobiDB-lite"/>
    </source>
</evidence>
<evidence type="ECO:0000305" key="3"/>
<name>PARB_MYCBO</name>
<proteinExistence type="inferred from homology"/>
<keyword id="KW-0159">Chromosome partition</keyword>
<keyword id="KW-0238">DNA-binding</keyword>
<keyword id="KW-1185">Reference proteome</keyword>
<gene>
    <name type="primary">parB</name>
    <name type="ordered locus">BQ2027_MB3948C</name>
</gene>
<dbReference type="EMBL" id="LT708304">
    <property type="protein sequence ID" value="SIU02579.1"/>
    <property type="molecule type" value="Genomic_DNA"/>
</dbReference>
<dbReference type="RefSeq" id="NP_857583.1">
    <property type="nucleotide sequence ID" value="NC_002945.3"/>
</dbReference>
<dbReference type="RefSeq" id="WP_003400175.1">
    <property type="nucleotide sequence ID" value="NC_002945.4"/>
</dbReference>
<dbReference type="SMR" id="P0A5R3"/>
<dbReference type="KEGG" id="mbo:BQ2027_MB3948C"/>
<dbReference type="PATRIC" id="fig|233413.5.peg.4326"/>
<dbReference type="Proteomes" id="UP000001419">
    <property type="component" value="Chromosome"/>
</dbReference>
<dbReference type="GO" id="GO:0005694">
    <property type="term" value="C:chromosome"/>
    <property type="evidence" value="ECO:0007669"/>
    <property type="project" value="TreeGrafter"/>
</dbReference>
<dbReference type="GO" id="GO:0003677">
    <property type="term" value="F:DNA binding"/>
    <property type="evidence" value="ECO:0007669"/>
    <property type="project" value="UniProtKB-KW"/>
</dbReference>
<dbReference type="GO" id="GO:0007059">
    <property type="term" value="P:chromosome segregation"/>
    <property type="evidence" value="ECO:0007669"/>
    <property type="project" value="UniProtKB-KW"/>
</dbReference>
<dbReference type="GO" id="GO:0045881">
    <property type="term" value="P:positive regulation of sporulation resulting in formation of a cellular spore"/>
    <property type="evidence" value="ECO:0007669"/>
    <property type="project" value="TreeGrafter"/>
</dbReference>
<dbReference type="CDD" id="cd16393">
    <property type="entry name" value="SPO0J_N"/>
    <property type="match status" value="1"/>
</dbReference>
<dbReference type="FunFam" id="1.10.10.2830:FF:000001">
    <property type="entry name" value="Chromosome partitioning protein ParB"/>
    <property type="match status" value="1"/>
</dbReference>
<dbReference type="FunFam" id="3.90.1530.30:FF:000001">
    <property type="entry name" value="Chromosome partitioning protein ParB"/>
    <property type="match status" value="1"/>
</dbReference>
<dbReference type="Gene3D" id="1.10.10.2830">
    <property type="match status" value="1"/>
</dbReference>
<dbReference type="Gene3D" id="3.90.1530.30">
    <property type="match status" value="1"/>
</dbReference>
<dbReference type="InterPro" id="IPR050336">
    <property type="entry name" value="Chromosome_partition/occlusion"/>
</dbReference>
<dbReference type="InterPro" id="IPR041468">
    <property type="entry name" value="HTH_ParB/Spo0J"/>
</dbReference>
<dbReference type="InterPro" id="IPR004437">
    <property type="entry name" value="ParB/RepB/Spo0J"/>
</dbReference>
<dbReference type="InterPro" id="IPR003115">
    <property type="entry name" value="ParB/Sulfiredoxin_dom"/>
</dbReference>
<dbReference type="InterPro" id="IPR036086">
    <property type="entry name" value="ParB/Sulfiredoxin_sf"/>
</dbReference>
<dbReference type="InterPro" id="IPR057240">
    <property type="entry name" value="ParB_dimer_C"/>
</dbReference>
<dbReference type="NCBIfam" id="TIGR00180">
    <property type="entry name" value="parB_part"/>
    <property type="match status" value="1"/>
</dbReference>
<dbReference type="PANTHER" id="PTHR33375">
    <property type="entry name" value="CHROMOSOME-PARTITIONING PROTEIN PARB-RELATED"/>
    <property type="match status" value="1"/>
</dbReference>
<dbReference type="PANTHER" id="PTHR33375:SF1">
    <property type="entry name" value="CHROMOSOME-PARTITIONING PROTEIN PARB-RELATED"/>
    <property type="match status" value="1"/>
</dbReference>
<dbReference type="Pfam" id="PF17762">
    <property type="entry name" value="HTH_ParB"/>
    <property type="match status" value="1"/>
</dbReference>
<dbReference type="Pfam" id="PF23552">
    <property type="entry name" value="ParB_dimer"/>
    <property type="match status" value="1"/>
</dbReference>
<dbReference type="Pfam" id="PF02195">
    <property type="entry name" value="ParBc"/>
    <property type="match status" value="1"/>
</dbReference>
<dbReference type="SMART" id="SM00470">
    <property type="entry name" value="ParB"/>
    <property type="match status" value="1"/>
</dbReference>
<dbReference type="SUPFAM" id="SSF109709">
    <property type="entry name" value="KorB DNA-binding domain-like"/>
    <property type="match status" value="1"/>
</dbReference>
<dbReference type="SUPFAM" id="SSF110849">
    <property type="entry name" value="ParB/Sulfiredoxin"/>
    <property type="match status" value="1"/>
</dbReference>
<reference key="1">
    <citation type="journal article" date="2003" name="Proc. Natl. Acad. Sci. U.S.A.">
        <title>The complete genome sequence of Mycobacterium bovis.</title>
        <authorList>
            <person name="Garnier T."/>
            <person name="Eiglmeier K."/>
            <person name="Camus J.-C."/>
            <person name="Medina N."/>
            <person name="Mansoor H."/>
            <person name="Pryor M."/>
            <person name="Duthoy S."/>
            <person name="Grondin S."/>
            <person name="Lacroix C."/>
            <person name="Monsempe C."/>
            <person name="Simon S."/>
            <person name="Harris B."/>
            <person name="Atkin R."/>
            <person name="Doggett J."/>
            <person name="Mayes R."/>
            <person name="Keating L."/>
            <person name="Wheeler P.R."/>
            <person name="Parkhill J."/>
            <person name="Barrell B.G."/>
            <person name="Cole S.T."/>
            <person name="Gordon S.V."/>
            <person name="Hewinson R.G."/>
        </authorList>
    </citation>
    <scope>NUCLEOTIDE SEQUENCE [LARGE SCALE GENOMIC DNA]</scope>
    <source>
        <strain>ATCC BAA-935 / AF2122/97</strain>
    </source>
</reference>
<reference key="2">
    <citation type="journal article" date="2017" name="Genome Announc.">
        <title>Updated reference genome sequence and annotation of Mycobacterium bovis AF2122/97.</title>
        <authorList>
            <person name="Malone K.M."/>
            <person name="Farrell D."/>
            <person name="Stuber T.P."/>
            <person name="Schubert O.T."/>
            <person name="Aebersold R."/>
            <person name="Robbe-Austerman S."/>
            <person name="Gordon S.V."/>
        </authorList>
    </citation>
    <scope>NUCLEOTIDE SEQUENCE [LARGE SCALE GENOMIC DNA]</scope>
    <scope>GENOME REANNOTATION</scope>
    <source>
        <strain>ATCC BAA-935 / AF2122/97</strain>
    </source>
</reference>
<feature type="chain" id="PRO_0000178686" description="Probable chromosome-partitioning protein ParB">
    <location>
        <begin position="1"/>
        <end position="344"/>
    </location>
</feature>
<feature type="region of interest" description="Disordered" evidence="2">
    <location>
        <begin position="1"/>
        <end position="33"/>
    </location>
</feature>
<feature type="region of interest" description="Disordered" evidence="2">
    <location>
        <begin position="259"/>
        <end position="283"/>
    </location>
</feature>
<feature type="compositionally biased region" description="Basic residues" evidence="2">
    <location>
        <begin position="1"/>
        <end position="10"/>
    </location>
</feature>
<feature type="compositionally biased region" description="Basic and acidic residues" evidence="2">
    <location>
        <begin position="261"/>
        <end position="270"/>
    </location>
</feature>
<protein>
    <recommendedName>
        <fullName>Probable chromosome-partitioning protein ParB</fullName>
    </recommendedName>
</protein>